<organism>
    <name type="scientific">Legionella pneumophila (strain Paris)</name>
    <dbReference type="NCBI Taxonomy" id="297246"/>
    <lineage>
        <taxon>Bacteria</taxon>
        <taxon>Pseudomonadati</taxon>
        <taxon>Pseudomonadota</taxon>
        <taxon>Gammaproteobacteria</taxon>
        <taxon>Legionellales</taxon>
        <taxon>Legionellaceae</taxon>
        <taxon>Legionella</taxon>
    </lineage>
</organism>
<gene>
    <name evidence="1" type="primary">rpsD</name>
    <name type="ordered locus">lpp0418</name>
</gene>
<evidence type="ECO:0000255" key="1">
    <source>
        <dbReference type="HAMAP-Rule" id="MF_01306"/>
    </source>
</evidence>
<evidence type="ECO:0000305" key="2"/>
<feature type="chain" id="PRO_0000132399" description="Small ribosomal subunit protein uS4">
    <location>
        <begin position="1"/>
        <end position="206"/>
    </location>
</feature>
<feature type="domain" description="S4 RNA-binding" evidence="1">
    <location>
        <begin position="96"/>
        <end position="161"/>
    </location>
</feature>
<protein>
    <recommendedName>
        <fullName evidence="1">Small ribosomal subunit protein uS4</fullName>
    </recommendedName>
    <alternativeName>
        <fullName evidence="2">30S ribosomal protein S4</fullName>
    </alternativeName>
</protein>
<name>RS4_LEGPA</name>
<accession>Q5X835</accession>
<keyword id="KW-0687">Ribonucleoprotein</keyword>
<keyword id="KW-0689">Ribosomal protein</keyword>
<keyword id="KW-0694">RNA-binding</keyword>
<keyword id="KW-0699">rRNA-binding</keyword>
<dbReference type="EMBL" id="CR628336">
    <property type="protein sequence ID" value="CAH11566.1"/>
    <property type="molecule type" value="Genomic_DNA"/>
</dbReference>
<dbReference type="RefSeq" id="WP_011213013.1">
    <property type="nucleotide sequence ID" value="NC_006368.1"/>
</dbReference>
<dbReference type="SMR" id="Q5X835"/>
<dbReference type="KEGG" id="lpp:lpp0418"/>
<dbReference type="LegioList" id="lpp0418"/>
<dbReference type="HOGENOM" id="CLU_092403_0_2_6"/>
<dbReference type="GO" id="GO:0015935">
    <property type="term" value="C:small ribosomal subunit"/>
    <property type="evidence" value="ECO:0007669"/>
    <property type="project" value="InterPro"/>
</dbReference>
<dbReference type="GO" id="GO:0019843">
    <property type="term" value="F:rRNA binding"/>
    <property type="evidence" value="ECO:0007669"/>
    <property type="project" value="UniProtKB-UniRule"/>
</dbReference>
<dbReference type="GO" id="GO:0003735">
    <property type="term" value="F:structural constituent of ribosome"/>
    <property type="evidence" value="ECO:0007669"/>
    <property type="project" value="InterPro"/>
</dbReference>
<dbReference type="GO" id="GO:0042274">
    <property type="term" value="P:ribosomal small subunit biogenesis"/>
    <property type="evidence" value="ECO:0007669"/>
    <property type="project" value="TreeGrafter"/>
</dbReference>
<dbReference type="GO" id="GO:0006412">
    <property type="term" value="P:translation"/>
    <property type="evidence" value="ECO:0007669"/>
    <property type="project" value="UniProtKB-UniRule"/>
</dbReference>
<dbReference type="CDD" id="cd00165">
    <property type="entry name" value="S4"/>
    <property type="match status" value="1"/>
</dbReference>
<dbReference type="FunFam" id="1.10.1050.10:FF:000001">
    <property type="entry name" value="30S ribosomal protein S4"/>
    <property type="match status" value="1"/>
</dbReference>
<dbReference type="FunFam" id="3.10.290.10:FF:000001">
    <property type="entry name" value="30S ribosomal protein S4"/>
    <property type="match status" value="1"/>
</dbReference>
<dbReference type="Gene3D" id="1.10.1050.10">
    <property type="entry name" value="Ribosomal Protein S4 Delta 41, Chain A, domain 1"/>
    <property type="match status" value="1"/>
</dbReference>
<dbReference type="Gene3D" id="3.10.290.10">
    <property type="entry name" value="RNA-binding S4 domain"/>
    <property type="match status" value="1"/>
</dbReference>
<dbReference type="HAMAP" id="MF_01306_B">
    <property type="entry name" value="Ribosomal_uS4_B"/>
    <property type="match status" value="1"/>
</dbReference>
<dbReference type="InterPro" id="IPR022801">
    <property type="entry name" value="Ribosomal_uS4"/>
</dbReference>
<dbReference type="InterPro" id="IPR005709">
    <property type="entry name" value="Ribosomal_uS4_bac-type"/>
</dbReference>
<dbReference type="InterPro" id="IPR018079">
    <property type="entry name" value="Ribosomal_uS4_CS"/>
</dbReference>
<dbReference type="InterPro" id="IPR001912">
    <property type="entry name" value="Ribosomal_uS4_N"/>
</dbReference>
<dbReference type="InterPro" id="IPR002942">
    <property type="entry name" value="S4_RNA-bd"/>
</dbReference>
<dbReference type="InterPro" id="IPR036986">
    <property type="entry name" value="S4_RNA-bd_sf"/>
</dbReference>
<dbReference type="NCBIfam" id="NF003717">
    <property type="entry name" value="PRK05327.1"/>
    <property type="match status" value="1"/>
</dbReference>
<dbReference type="NCBIfam" id="TIGR01017">
    <property type="entry name" value="rpsD_bact"/>
    <property type="match status" value="1"/>
</dbReference>
<dbReference type="PANTHER" id="PTHR11831">
    <property type="entry name" value="30S 40S RIBOSOMAL PROTEIN"/>
    <property type="match status" value="1"/>
</dbReference>
<dbReference type="PANTHER" id="PTHR11831:SF4">
    <property type="entry name" value="SMALL RIBOSOMAL SUBUNIT PROTEIN US4M"/>
    <property type="match status" value="1"/>
</dbReference>
<dbReference type="Pfam" id="PF00163">
    <property type="entry name" value="Ribosomal_S4"/>
    <property type="match status" value="1"/>
</dbReference>
<dbReference type="Pfam" id="PF01479">
    <property type="entry name" value="S4"/>
    <property type="match status" value="1"/>
</dbReference>
<dbReference type="SMART" id="SM01390">
    <property type="entry name" value="Ribosomal_S4"/>
    <property type="match status" value="1"/>
</dbReference>
<dbReference type="SMART" id="SM00363">
    <property type="entry name" value="S4"/>
    <property type="match status" value="1"/>
</dbReference>
<dbReference type="SUPFAM" id="SSF55174">
    <property type="entry name" value="Alpha-L RNA-binding motif"/>
    <property type="match status" value="1"/>
</dbReference>
<dbReference type="PROSITE" id="PS00632">
    <property type="entry name" value="RIBOSOMAL_S4"/>
    <property type="match status" value="1"/>
</dbReference>
<dbReference type="PROSITE" id="PS50889">
    <property type="entry name" value="S4"/>
    <property type="match status" value="1"/>
</dbReference>
<sequence>MARYLGPKCKLSRREGCDLLLKSGVRDHKSKCKSEKLPGQHGDKKPRLNSYGIQLREKQKIRRLYGILEKQFRNYYKKAARQKGSTGENLMALLERRLDNVVYRMGFASTRAEARQLVAHKAILVNDKVVNVPSFLVNPGDTISVRQKAKNQGRIQAALALSEQRAPCDWITVDTGSFKGTFSTAPTLMDLSSDYNVNLVVELYSK</sequence>
<comment type="function">
    <text evidence="1">One of the primary rRNA binding proteins, it binds directly to 16S rRNA where it nucleates assembly of the body of the 30S subunit.</text>
</comment>
<comment type="function">
    <text evidence="1">With S5 and S12 plays an important role in translational accuracy.</text>
</comment>
<comment type="subunit">
    <text evidence="1">Part of the 30S ribosomal subunit. Contacts protein S5. The interaction surface between S4 and S5 is involved in control of translational fidelity.</text>
</comment>
<comment type="similarity">
    <text evidence="1">Belongs to the universal ribosomal protein uS4 family.</text>
</comment>
<proteinExistence type="inferred from homology"/>
<reference key="1">
    <citation type="journal article" date="2004" name="Nat. Genet.">
        <title>Evidence in the Legionella pneumophila genome for exploitation of host cell functions and high genome plasticity.</title>
        <authorList>
            <person name="Cazalet C."/>
            <person name="Rusniok C."/>
            <person name="Brueggemann H."/>
            <person name="Zidane N."/>
            <person name="Magnier A."/>
            <person name="Ma L."/>
            <person name="Tichit M."/>
            <person name="Jarraud S."/>
            <person name="Bouchier C."/>
            <person name="Vandenesch F."/>
            <person name="Kunst F."/>
            <person name="Etienne J."/>
            <person name="Glaser P."/>
            <person name="Buchrieser C."/>
        </authorList>
    </citation>
    <scope>NUCLEOTIDE SEQUENCE [LARGE SCALE GENOMIC DNA]</scope>
    <source>
        <strain>Paris</strain>
    </source>
</reference>